<dbReference type="EMBL" id="BX571857">
    <property type="protein sequence ID" value="CAG43919.1"/>
    <property type="molecule type" value="Genomic_DNA"/>
</dbReference>
<dbReference type="RefSeq" id="WP_001790547.1">
    <property type="nucleotide sequence ID" value="NC_002953.3"/>
</dbReference>
<dbReference type="SMR" id="Q6G7A4"/>
<dbReference type="GeneID" id="98346529"/>
<dbReference type="KEGG" id="sas:SAS2108"/>
<dbReference type="HOGENOM" id="CLU_046483_2_1_9"/>
<dbReference type="GO" id="GO:0022627">
    <property type="term" value="C:cytosolic small ribosomal subunit"/>
    <property type="evidence" value="ECO:0007669"/>
    <property type="project" value="TreeGrafter"/>
</dbReference>
<dbReference type="GO" id="GO:0003723">
    <property type="term" value="F:RNA binding"/>
    <property type="evidence" value="ECO:0007669"/>
    <property type="project" value="TreeGrafter"/>
</dbReference>
<dbReference type="GO" id="GO:0003735">
    <property type="term" value="F:structural constituent of ribosome"/>
    <property type="evidence" value="ECO:0007669"/>
    <property type="project" value="InterPro"/>
</dbReference>
<dbReference type="GO" id="GO:0006412">
    <property type="term" value="P:translation"/>
    <property type="evidence" value="ECO:0007669"/>
    <property type="project" value="UniProtKB-UniRule"/>
</dbReference>
<dbReference type="FunFam" id="3.30.230.10:FF:000001">
    <property type="entry name" value="30S ribosomal protein S9"/>
    <property type="match status" value="1"/>
</dbReference>
<dbReference type="Gene3D" id="3.30.230.10">
    <property type="match status" value="1"/>
</dbReference>
<dbReference type="HAMAP" id="MF_00532_B">
    <property type="entry name" value="Ribosomal_uS9_B"/>
    <property type="match status" value="1"/>
</dbReference>
<dbReference type="InterPro" id="IPR020568">
    <property type="entry name" value="Ribosomal_Su5_D2-typ_SF"/>
</dbReference>
<dbReference type="InterPro" id="IPR000754">
    <property type="entry name" value="Ribosomal_uS9"/>
</dbReference>
<dbReference type="InterPro" id="IPR023035">
    <property type="entry name" value="Ribosomal_uS9_bac/plastid"/>
</dbReference>
<dbReference type="InterPro" id="IPR020574">
    <property type="entry name" value="Ribosomal_uS9_CS"/>
</dbReference>
<dbReference type="InterPro" id="IPR014721">
    <property type="entry name" value="Ribsml_uS5_D2-typ_fold_subgr"/>
</dbReference>
<dbReference type="NCBIfam" id="NF001099">
    <property type="entry name" value="PRK00132.1"/>
    <property type="match status" value="1"/>
</dbReference>
<dbReference type="PANTHER" id="PTHR21569">
    <property type="entry name" value="RIBOSOMAL PROTEIN S9"/>
    <property type="match status" value="1"/>
</dbReference>
<dbReference type="PANTHER" id="PTHR21569:SF1">
    <property type="entry name" value="SMALL RIBOSOMAL SUBUNIT PROTEIN US9M"/>
    <property type="match status" value="1"/>
</dbReference>
<dbReference type="Pfam" id="PF00380">
    <property type="entry name" value="Ribosomal_S9"/>
    <property type="match status" value="1"/>
</dbReference>
<dbReference type="SUPFAM" id="SSF54211">
    <property type="entry name" value="Ribosomal protein S5 domain 2-like"/>
    <property type="match status" value="1"/>
</dbReference>
<dbReference type="PROSITE" id="PS00360">
    <property type="entry name" value="RIBOSOMAL_S9"/>
    <property type="match status" value="1"/>
</dbReference>
<organism>
    <name type="scientific">Staphylococcus aureus (strain MSSA476)</name>
    <dbReference type="NCBI Taxonomy" id="282459"/>
    <lineage>
        <taxon>Bacteria</taxon>
        <taxon>Bacillati</taxon>
        <taxon>Bacillota</taxon>
        <taxon>Bacilli</taxon>
        <taxon>Bacillales</taxon>
        <taxon>Staphylococcaceae</taxon>
        <taxon>Staphylococcus</taxon>
    </lineage>
</organism>
<proteinExistence type="inferred from homology"/>
<name>RS9_STAAS</name>
<feature type="chain" id="PRO_0000111408" description="Small ribosomal subunit protein uS9">
    <location>
        <begin position="1"/>
        <end position="130"/>
    </location>
</feature>
<feature type="region of interest" description="Disordered" evidence="2">
    <location>
        <begin position="99"/>
        <end position="130"/>
    </location>
</feature>
<feature type="compositionally biased region" description="Basic residues" evidence="2">
    <location>
        <begin position="111"/>
        <end position="130"/>
    </location>
</feature>
<accession>Q6G7A4</accession>
<protein>
    <recommendedName>
        <fullName evidence="1">Small ribosomal subunit protein uS9</fullName>
    </recommendedName>
    <alternativeName>
        <fullName evidence="3">30S ribosomal protein S9</fullName>
    </alternativeName>
</protein>
<reference key="1">
    <citation type="journal article" date="2004" name="Proc. Natl. Acad. Sci. U.S.A.">
        <title>Complete genomes of two clinical Staphylococcus aureus strains: evidence for the rapid evolution of virulence and drug resistance.</title>
        <authorList>
            <person name="Holden M.T.G."/>
            <person name="Feil E.J."/>
            <person name="Lindsay J.A."/>
            <person name="Peacock S.J."/>
            <person name="Day N.P.J."/>
            <person name="Enright M.C."/>
            <person name="Foster T.J."/>
            <person name="Moore C.E."/>
            <person name="Hurst L."/>
            <person name="Atkin R."/>
            <person name="Barron A."/>
            <person name="Bason N."/>
            <person name="Bentley S.D."/>
            <person name="Chillingworth C."/>
            <person name="Chillingworth T."/>
            <person name="Churcher C."/>
            <person name="Clark L."/>
            <person name="Corton C."/>
            <person name="Cronin A."/>
            <person name="Doggett J."/>
            <person name="Dowd L."/>
            <person name="Feltwell T."/>
            <person name="Hance Z."/>
            <person name="Harris B."/>
            <person name="Hauser H."/>
            <person name="Holroyd S."/>
            <person name="Jagels K."/>
            <person name="James K.D."/>
            <person name="Lennard N."/>
            <person name="Line A."/>
            <person name="Mayes R."/>
            <person name="Moule S."/>
            <person name="Mungall K."/>
            <person name="Ormond D."/>
            <person name="Quail M.A."/>
            <person name="Rabbinowitsch E."/>
            <person name="Rutherford K.M."/>
            <person name="Sanders M."/>
            <person name="Sharp S."/>
            <person name="Simmonds M."/>
            <person name="Stevens K."/>
            <person name="Whitehead S."/>
            <person name="Barrell B.G."/>
            <person name="Spratt B.G."/>
            <person name="Parkhill J."/>
        </authorList>
    </citation>
    <scope>NUCLEOTIDE SEQUENCE [LARGE SCALE GENOMIC DNA]</scope>
    <source>
        <strain>MSSA476</strain>
    </source>
</reference>
<evidence type="ECO:0000255" key="1">
    <source>
        <dbReference type="HAMAP-Rule" id="MF_00532"/>
    </source>
</evidence>
<evidence type="ECO:0000256" key="2">
    <source>
        <dbReference type="SAM" id="MobiDB-lite"/>
    </source>
</evidence>
<evidence type="ECO:0000305" key="3"/>
<keyword id="KW-0687">Ribonucleoprotein</keyword>
<keyword id="KW-0689">Ribosomal protein</keyword>
<sequence>MAQVEYRGTGRRKNSVARVRLVPGEGNITVNNRDVREYLPFESLILDLNQPFDVTETKGNYDVLVNVHGGGFTGQAQAIRHGIARALLEADPEYRGSLKRAGLLTRDPRMKERKKPGLKAARRSPQFSKR</sequence>
<comment type="similarity">
    <text evidence="1">Belongs to the universal ribosomal protein uS9 family.</text>
</comment>
<gene>
    <name evidence="1" type="primary">rpsI</name>
    <name type="ordered locus">SAS2108</name>
</gene>